<proteinExistence type="inferred from homology"/>
<sequence length="446" mass="47818">MSDKRRYFGTDGVRGKVGQYPITPDFVLKLGWAAGRVLAKQGTRKVIIGKDTRISGYMLESALEAGLAAAGLKATFTGPMPTPAVAYLTQTFRAEAGIVISASHNPYYDNGIKFFSYEGAKLPDDIELAIEAELDKDIECVESAELGKASRMVDAAGRYIEFCKSTFPSKLSLSGLKLVVDCANGATYHIAPNVFRELGAEVIAMGVEPNGLNINDQVGATDVRALQKRVVEEHAHLGLAFDGDGDRIIMVDHLGNKVDGDQIAYIIARDALRRGELKGGVVGTLMTNLGMENGLKQLGIPFVRAAVGDRYVMEKLLEKGWKIGAENSGHVILLDKVTTGDAIVAGLQVLASVVGSEMTLHELAKGMTLYPQVLENVRFAGDNNPLEADAVKAAVSEVEAELGSKGRVLLRKSGTEPLIRVMVEGEDETLVKQSALKIAQAVKDNC</sequence>
<feature type="chain" id="PRO_1000073577" description="Phosphoglucosamine mutase">
    <location>
        <begin position="1"/>
        <end position="446"/>
    </location>
</feature>
<feature type="active site" description="Phosphoserine intermediate" evidence="1">
    <location>
        <position position="103"/>
    </location>
</feature>
<feature type="binding site" description="via phosphate group" evidence="1">
    <location>
        <position position="103"/>
    </location>
    <ligand>
        <name>Mg(2+)</name>
        <dbReference type="ChEBI" id="CHEBI:18420"/>
    </ligand>
</feature>
<feature type="binding site" evidence="1">
    <location>
        <position position="242"/>
    </location>
    <ligand>
        <name>Mg(2+)</name>
        <dbReference type="ChEBI" id="CHEBI:18420"/>
    </ligand>
</feature>
<feature type="binding site" evidence="1">
    <location>
        <position position="244"/>
    </location>
    <ligand>
        <name>Mg(2+)</name>
        <dbReference type="ChEBI" id="CHEBI:18420"/>
    </ligand>
</feature>
<feature type="binding site" evidence="1">
    <location>
        <position position="246"/>
    </location>
    <ligand>
        <name>Mg(2+)</name>
        <dbReference type="ChEBI" id="CHEBI:18420"/>
    </ligand>
</feature>
<feature type="modified residue" description="Phosphoserine" evidence="1">
    <location>
        <position position="103"/>
    </location>
</feature>
<name>GLMM_VIBC3</name>
<keyword id="KW-0413">Isomerase</keyword>
<keyword id="KW-0460">Magnesium</keyword>
<keyword id="KW-0479">Metal-binding</keyword>
<keyword id="KW-0597">Phosphoprotein</keyword>
<evidence type="ECO:0000255" key="1">
    <source>
        <dbReference type="HAMAP-Rule" id="MF_01554"/>
    </source>
</evidence>
<dbReference type="EC" id="5.4.2.10" evidence="1"/>
<dbReference type="EMBL" id="CP000627">
    <property type="protein sequence ID" value="ABQ21176.1"/>
    <property type="molecule type" value="Genomic_DNA"/>
</dbReference>
<dbReference type="EMBL" id="CP001235">
    <property type="protein sequence ID" value="ACP08674.1"/>
    <property type="molecule type" value="Genomic_DNA"/>
</dbReference>
<dbReference type="RefSeq" id="WP_001281061.1">
    <property type="nucleotide sequence ID" value="NZ_JAACZH010000006.1"/>
</dbReference>
<dbReference type="SMR" id="A5F930"/>
<dbReference type="KEGG" id="vco:VC0395_A0168"/>
<dbReference type="KEGG" id="vcr:VC395_0656"/>
<dbReference type="PATRIC" id="fig|345073.21.peg.637"/>
<dbReference type="eggNOG" id="COG1109">
    <property type="taxonomic scope" value="Bacteria"/>
</dbReference>
<dbReference type="HOGENOM" id="CLU_016950_7_0_6"/>
<dbReference type="OrthoDB" id="9803322at2"/>
<dbReference type="Proteomes" id="UP000000249">
    <property type="component" value="Chromosome 2"/>
</dbReference>
<dbReference type="GO" id="GO:0005829">
    <property type="term" value="C:cytosol"/>
    <property type="evidence" value="ECO:0007669"/>
    <property type="project" value="TreeGrafter"/>
</dbReference>
<dbReference type="GO" id="GO:0000287">
    <property type="term" value="F:magnesium ion binding"/>
    <property type="evidence" value="ECO:0007669"/>
    <property type="project" value="UniProtKB-UniRule"/>
</dbReference>
<dbReference type="GO" id="GO:0008966">
    <property type="term" value="F:phosphoglucosamine mutase activity"/>
    <property type="evidence" value="ECO:0007669"/>
    <property type="project" value="UniProtKB-UniRule"/>
</dbReference>
<dbReference type="GO" id="GO:0004615">
    <property type="term" value="F:phosphomannomutase activity"/>
    <property type="evidence" value="ECO:0007669"/>
    <property type="project" value="TreeGrafter"/>
</dbReference>
<dbReference type="GO" id="GO:0005975">
    <property type="term" value="P:carbohydrate metabolic process"/>
    <property type="evidence" value="ECO:0007669"/>
    <property type="project" value="InterPro"/>
</dbReference>
<dbReference type="GO" id="GO:0009252">
    <property type="term" value="P:peptidoglycan biosynthetic process"/>
    <property type="evidence" value="ECO:0007669"/>
    <property type="project" value="TreeGrafter"/>
</dbReference>
<dbReference type="GO" id="GO:0006048">
    <property type="term" value="P:UDP-N-acetylglucosamine biosynthetic process"/>
    <property type="evidence" value="ECO:0007669"/>
    <property type="project" value="TreeGrafter"/>
</dbReference>
<dbReference type="CDD" id="cd05802">
    <property type="entry name" value="GlmM"/>
    <property type="match status" value="1"/>
</dbReference>
<dbReference type="FunFam" id="3.30.310.50:FF:000001">
    <property type="entry name" value="Phosphoglucosamine mutase"/>
    <property type="match status" value="1"/>
</dbReference>
<dbReference type="FunFam" id="3.40.120.10:FF:000001">
    <property type="entry name" value="Phosphoglucosamine mutase"/>
    <property type="match status" value="1"/>
</dbReference>
<dbReference type="FunFam" id="3.40.120.10:FF:000003">
    <property type="entry name" value="Phosphoglucosamine mutase"/>
    <property type="match status" value="1"/>
</dbReference>
<dbReference type="Gene3D" id="3.40.120.10">
    <property type="entry name" value="Alpha-D-Glucose-1,6-Bisphosphate, subunit A, domain 3"/>
    <property type="match status" value="3"/>
</dbReference>
<dbReference type="Gene3D" id="3.30.310.50">
    <property type="entry name" value="Alpha-D-phosphohexomutase, C-terminal domain"/>
    <property type="match status" value="1"/>
</dbReference>
<dbReference type="HAMAP" id="MF_01554_B">
    <property type="entry name" value="GlmM_B"/>
    <property type="match status" value="1"/>
</dbReference>
<dbReference type="InterPro" id="IPR005844">
    <property type="entry name" value="A-D-PHexomutase_a/b/a-I"/>
</dbReference>
<dbReference type="InterPro" id="IPR016055">
    <property type="entry name" value="A-D-PHexomutase_a/b/a-I/II/III"/>
</dbReference>
<dbReference type="InterPro" id="IPR005845">
    <property type="entry name" value="A-D-PHexomutase_a/b/a-II"/>
</dbReference>
<dbReference type="InterPro" id="IPR005846">
    <property type="entry name" value="A-D-PHexomutase_a/b/a-III"/>
</dbReference>
<dbReference type="InterPro" id="IPR005843">
    <property type="entry name" value="A-D-PHexomutase_C"/>
</dbReference>
<dbReference type="InterPro" id="IPR036900">
    <property type="entry name" value="A-D-PHexomutase_C_sf"/>
</dbReference>
<dbReference type="InterPro" id="IPR016066">
    <property type="entry name" value="A-D-PHexomutase_CS"/>
</dbReference>
<dbReference type="InterPro" id="IPR005841">
    <property type="entry name" value="Alpha-D-phosphohexomutase_SF"/>
</dbReference>
<dbReference type="InterPro" id="IPR006352">
    <property type="entry name" value="GlmM_bact"/>
</dbReference>
<dbReference type="InterPro" id="IPR050060">
    <property type="entry name" value="Phosphoglucosamine_mutase"/>
</dbReference>
<dbReference type="NCBIfam" id="TIGR01455">
    <property type="entry name" value="glmM"/>
    <property type="match status" value="1"/>
</dbReference>
<dbReference type="NCBIfam" id="NF008139">
    <property type="entry name" value="PRK10887.1"/>
    <property type="match status" value="1"/>
</dbReference>
<dbReference type="PANTHER" id="PTHR42946:SF1">
    <property type="entry name" value="PHOSPHOGLUCOMUTASE (ALPHA-D-GLUCOSE-1,6-BISPHOSPHATE-DEPENDENT)"/>
    <property type="match status" value="1"/>
</dbReference>
<dbReference type="PANTHER" id="PTHR42946">
    <property type="entry name" value="PHOSPHOHEXOSE MUTASE"/>
    <property type="match status" value="1"/>
</dbReference>
<dbReference type="Pfam" id="PF02878">
    <property type="entry name" value="PGM_PMM_I"/>
    <property type="match status" value="1"/>
</dbReference>
<dbReference type="Pfam" id="PF02879">
    <property type="entry name" value="PGM_PMM_II"/>
    <property type="match status" value="1"/>
</dbReference>
<dbReference type="Pfam" id="PF02880">
    <property type="entry name" value="PGM_PMM_III"/>
    <property type="match status" value="1"/>
</dbReference>
<dbReference type="Pfam" id="PF00408">
    <property type="entry name" value="PGM_PMM_IV"/>
    <property type="match status" value="1"/>
</dbReference>
<dbReference type="PRINTS" id="PR00509">
    <property type="entry name" value="PGMPMM"/>
</dbReference>
<dbReference type="SUPFAM" id="SSF55957">
    <property type="entry name" value="Phosphoglucomutase, C-terminal domain"/>
    <property type="match status" value="1"/>
</dbReference>
<dbReference type="SUPFAM" id="SSF53738">
    <property type="entry name" value="Phosphoglucomutase, first 3 domains"/>
    <property type="match status" value="3"/>
</dbReference>
<dbReference type="PROSITE" id="PS00710">
    <property type="entry name" value="PGM_PMM"/>
    <property type="match status" value="1"/>
</dbReference>
<gene>
    <name evidence="1" type="primary">glmM</name>
    <name type="ordered locus">VC0395_A0168</name>
    <name type="ordered locus">VC395_0656</name>
</gene>
<reference key="1">
    <citation type="submission" date="2007-03" db="EMBL/GenBank/DDBJ databases">
        <authorList>
            <person name="Heidelberg J."/>
        </authorList>
    </citation>
    <scope>NUCLEOTIDE SEQUENCE [LARGE SCALE GENOMIC DNA]</scope>
    <source>
        <strain>ATCC 39541 / Classical Ogawa 395 / O395</strain>
    </source>
</reference>
<reference key="2">
    <citation type="journal article" date="2008" name="PLoS ONE">
        <title>A recalibrated molecular clock and independent origins for the cholera pandemic clones.</title>
        <authorList>
            <person name="Feng L."/>
            <person name="Reeves P.R."/>
            <person name="Lan R."/>
            <person name="Ren Y."/>
            <person name="Gao C."/>
            <person name="Zhou Z."/>
            <person name="Ren Y."/>
            <person name="Cheng J."/>
            <person name="Wang W."/>
            <person name="Wang J."/>
            <person name="Qian W."/>
            <person name="Li D."/>
            <person name="Wang L."/>
        </authorList>
    </citation>
    <scope>NUCLEOTIDE SEQUENCE [LARGE SCALE GENOMIC DNA]</scope>
    <source>
        <strain>ATCC 39541 / Classical Ogawa 395 / O395</strain>
    </source>
</reference>
<accession>A5F930</accession>
<accession>C3LXV0</accession>
<protein>
    <recommendedName>
        <fullName evidence="1">Phosphoglucosamine mutase</fullName>
        <ecNumber evidence="1">5.4.2.10</ecNumber>
    </recommendedName>
</protein>
<comment type="function">
    <text evidence="1">Catalyzes the conversion of glucosamine-6-phosphate to glucosamine-1-phosphate.</text>
</comment>
<comment type="catalytic activity">
    <reaction evidence="1">
        <text>alpha-D-glucosamine 1-phosphate = D-glucosamine 6-phosphate</text>
        <dbReference type="Rhea" id="RHEA:23424"/>
        <dbReference type="ChEBI" id="CHEBI:58516"/>
        <dbReference type="ChEBI" id="CHEBI:58725"/>
        <dbReference type="EC" id="5.4.2.10"/>
    </reaction>
</comment>
<comment type="cofactor">
    <cofactor evidence="1">
        <name>Mg(2+)</name>
        <dbReference type="ChEBI" id="CHEBI:18420"/>
    </cofactor>
    <text evidence="1">Binds 1 Mg(2+) ion per subunit.</text>
</comment>
<comment type="PTM">
    <text evidence="1">Activated by phosphorylation.</text>
</comment>
<comment type="similarity">
    <text evidence="1">Belongs to the phosphohexose mutase family.</text>
</comment>
<organism>
    <name type="scientific">Vibrio cholerae serotype O1 (strain ATCC 39541 / Classical Ogawa 395 / O395)</name>
    <dbReference type="NCBI Taxonomy" id="345073"/>
    <lineage>
        <taxon>Bacteria</taxon>
        <taxon>Pseudomonadati</taxon>
        <taxon>Pseudomonadota</taxon>
        <taxon>Gammaproteobacteria</taxon>
        <taxon>Vibrionales</taxon>
        <taxon>Vibrionaceae</taxon>
        <taxon>Vibrio</taxon>
    </lineage>
</organism>